<organism>
    <name type="scientific">Actinobacillus pleuropneumoniae serotype 7 (strain AP76)</name>
    <dbReference type="NCBI Taxonomy" id="537457"/>
    <lineage>
        <taxon>Bacteria</taxon>
        <taxon>Pseudomonadati</taxon>
        <taxon>Pseudomonadota</taxon>
        <taxon>Gammaproteobacteria</taxon>
        <taxon>Pasteurellales</taxon>
        <taxon>Pasteurellaceae</taxon>
        <taxon>Actinobacillus</taxon>
    </lineage>
</organism>
<comment type="function">
    <text evidence="1">Catalyzes the isomerization between 2-isopropylmalate and 3-isopropylmalate, via the formation of 2-isopropylmaleate.</text>
</comment>
<comment type="catalytic activity">
    <reaction evidence="1">
        <text>(2R,3S)-3-isopropylmalate = (2S)-2-isopropylmalate</text>
        <dbReference type="Rhea" id="RHEA:32287"/>
        <dbReference type="ChEBI" id="CHEBI:1178"/>
        <dbReference type="ChEBI" id="CHEBI:35121"/>
        <dbReference type="EC" id="4.2.1.33"/>
    </reaction>
</comment>
<comment type="pathway">
    <text evidence="1">Amino-acid biosynthesis; L-leucine biosynthesis; L-leucine from 3-methyl-2-oxobutanoate: step 2/4.</text>
</comment>
<comment type="subunit">
    <text evidence="1">Heterodimer of LeuC and LeuD.</text>
</comment>
<comment type="similarity">
    <text evidence="1">Belongs to the LeuD family. LeuD type 1 subfamily.</text>
</comment>
<accession>B3GZY0</accession>
<gene>
    <name evidence="1" type="primary">leuD</name>
    <name type="ordered locus">APP7_0140</name>
</gene>
<evidence type="ECO:0000255" key="1">
    <source>
        <dbReference type="HAMAP-Rule" id="MF_01031"/>
    </source>
</evidence>
<proteinExistence type="inferred from homology"/>
<protein>
    <recommendedName>
        <fullName evidence="1">3-isopropylmalate dehydratase small subunit</fullName>
        <ecNumber evidence="1">4.2.1.33</ecNumber>
    </recommendedName>
    <alternativeName>
        <fullName evidence="1">Alpha-IPM isomerase</fullName>
        <shortName evidence="1">IPMI</shortName>
    </alternativeName>
    <alternativeName>
        <fullName evidence="1">Isopropylmalate isomerase</fullName>
    </alternativeName>
</protein>
<feature type="chain" id="PRO_1000135783" description="3-isopropylmalate dehydratase small subunit">
    <location>
        <begin position="1"/>
        <end position="200"/>
    </location>
</feature>
<name>LEUD_ACTP7</name>
<reference key="1">
    <citation type="submission" date="2008-06" db="EMBL/GenBank/DDBJ databases">
        <title>Genome and proteome analysis of A. pleuropneumoniae serotype 7.</title>
        <authorList>
            <person name="Linke B."/>
            <person name="Buettner F."/>
            <person name="Martinez-Arias R."/>
            <person name="Goesmann A."/>
            <person name="Baltes N."/>
            <person name="Tegetmeyer H."/>
            <person name="Singh M."/>
            <person name="Gerlach G.F."/>
        </authorList>
    </citation>
    <scope>NUCLEOTIDE SEQUENCE [LARGE SCALE GENOMIC DNA]</scope>
    <source>
        <strain>AP76</strain>
    </source>
</reference>
<keyword id="KW-0028">Amino-acid biosynthesis</keyword>
<keyword id="KW-0100">Branched-chain amino acid biosynthesis</keyword>
<keyword id="KW-0432">Leucine biosynthesis</keyword>
<keyword id="KW-0456">Lyase</keyword>
<dbReference type="EC" id="4.2.1.33" evidence="1"/>
<dbReference type="EMBL" id="CP001091">
    <property type="protein sequence ID" value="ACE60792.1"/>
    <property type="molecule type" value="Genomic_DNA"/>
</dbReference>
<dbReference type="RefSeq" id="WP_005616619.1">
    <property type="nucleotide sequence ID" value="NC_010939.1"/>
</dbReference>
<dbReference type="SMR" id="B3GZY0"/>
<dbReference type="KEGG" id="apa:APP7_0140"/>
<dbReference type="HOGENOM" id="CLU_081378_0_3_6"/>
<dbReference type="UniPathway" id="UPA00048">
    <property type="reaction ID" value="UER00071"/>
</dbReference>
<dbReference type="Proteomes" id="UP000001226">
    <property type="component" value="Chromosome"/>
</dbReference>
<dbReference type="GO" id="GO:0009316">
    <property type="term" value="C:3-isopropylmalate dehydratase complex"/>
    <property type="evidence" value="ECO:0007669"/>
    <property type="project" value="InterPro"/>
</dbReference>
<dbReference type="GO" id="GO:0003861">
    <property type="term" value="F:3-isopropylmalate dehydratase activity"/>
    <property type="evidence" value="ECO:0007669"/>
    <property type="project" value="UniProtKB-UniRule"/>
</dbReference>
<dbReference type="GO" id="GO:0009098">
    <property type="term" value="P:L-leucine biosynthetic process"/>
    <property type="evidence" value="ECO:0007669"/>
    <property type="project" value="UniProtKB-UniRule"/>
</dbReference>
<dbReference type="CDD" id="cd01577">
    <property type="entry name" value="IPMI_Swivel"/>
    <property type="match status" value="1"/>
</dbReference>
<dbReference type="FunFam" id="3.20.19.10:FF:000003">
    <property type="entry name" value="3-isopropylmalate dehydratase small subunit"/>
    <property type="match status" value="1"/>
</dbReference>
<dbReference type="Gene3D" id="3.20.19.10">
    <property type="entry name" value="Aconitase, domain 4"/>
    <property type="match status" value="1"/>
</dbReference>
<dbReference type="HAMAP" id="MF_01031">
    <property type="entry name" value="LeuD_type1"/>
    <property type="match status" value="1"/>
</dbReference>
<dbReference type="InterPro" id="IPR004431">
    <property type="entry name" value="3-IsopropMal_deHydase_ssu"/>
</dbReference>
<dbReference type="InterPro" id="IPR015928">
    <property type="entry name" value="Aconitase/3IPM_dehydase_swvl"/>
</dbReference>
<dbReference type="InterPro" id="IPR000573">
    <property type="entry name" value="AconitaseA/IPMdHydase_ssu_swvl"/>
</dbReference>
<dbReference type="InterPro" id="IPR033940">
    <property type="entry name" value="IPMI_Swivel"/>
</dbReference>
<dbReference type="InterPro" id="IPR050075">
    <property type="entry name" value="LeuD"/>
</dbReference>
<dbReference type="NCBIfam" id="TIGR00171">
    <property type="entry name" value="leuD"/>
    <property type="match status" value="1"/>
</dbReference>
<dbReference type="NCBIfam" id="NF002458">
    <property type="entry name" value="PRK01641.1"/>
    <property type="match status" value="1"/>
</dbReference>
<dbReference type="PANTHER" id="PTHR43345:SF5">
    <property type="entry name" value="3-ISOPROPYLMALATE DEHYDRATASE SMALL SUBUNIT"/>
    <property type="match status" value="1"/>
</dbReference>
<dbReference type="PANTHER" id="PTHR43345">
    <property type="entry name" value="3-ISOPROPYLMALATE DEHYDRATASE SMALL SUBUNIT 2-RELATED-RELATED"/>
    <property type="match status" value="1"/>
</dbReference>
<dbReference type="Pfam" id="PF00694">
    <property type="entry name" value="Aconitase_C"/>
    <property type="match status" value="1"/>
</dbReference>
<dbReference type="SUPFAM" id="SSF52016">
    <property type="entry name" value="LeuD/IlvD-like"/>
    <property type="match status" value="1"/>
</dbReference>
<sequence>MAGLKQHSGLVVPLDAANVDTDAIIPKQFLQAITRVGFGKHLFHEWRYLDAEETRLNPDFVLNFPQYQGATILLARKNLGCGSSREHAPWALADYGFKVMIAPSFADIFYNNSLNNHMLPIRLSEEEVEEIFQWVWANEGKQIHIDLEAMTVTVGDKIYRFELDEFRRHCLLNGLDNIGLTLQHEDAIIAYESKIPAFLR</sequence>